<reference key="1">
    <citation type="journal article" date="1993" name="Gene">
        <title>Comparative analysis of the sequence and structure of two Drosophila melanogaster genes encoding vitelline membrane proteins.</title>
        <authorList>
            <person name="Scherer L.J."/>
            <person name="Harris D.H."/>
            <person name="White M.K."/>
            <person name="Steel L.S."/>
            <person name="Jin J."/>
            <person name="Petri W.H."/>
        </authorList>
    </citation>
    <scope>NUCLEOTIDE SEQUENCE</scope>
</reference>
<reference key="2">
    <citation type="journal article" date="2007" name="Mol. Biol. Evol.">
        <title>Rapid evolution of outer egg membrane proteins in the Drosophila melanogaster subgroup: a case of ecologically driven evolution of female reproductive traits.</title>
        <authorList>
            <person name="Jagadeeshan S."/>
            <person name="Singh R.S."/>
        </authorList>
    </citation>
    <scope>NUCLEOTIDE SEQUENCE [GENOMIC DNA]</scope>
</reference>
<reference key="3">
    <citation type="journal article" date="2000" name="Science">
        <title>The genome sequence of Drosophila melanogaster.</title>
        <authorList>
            <person name="Adams M.D."/>
            <person name="Celniker S.E."/>
            <person name="Holt R.A."/>
            <person name="Evans C.A."/>
            <person name="Gocayne J.D."/>
            <person name="Amanatides P.G."/>
            <person name="Scherer S.E."/>
            <person name="Li P.W."/>
            <person name="Hoskins R.A."/>
            <person name="Galle R.F."/>
            <person name="George R.A."/>
            <person name="Lewis S.E."/>
            <person name="Richards S."/>
            <person name="Ashburner M."/>
            <person name="Henderson S.N."/>
            <person name="Sutton G.G."/>
            <person name="Wortman J.R."/>
            <person name="Yandell M.D."/>
            <person name="Zhang Q."/>
            <person name="Chen L.X."/>
            <person name="Brandon R.C."/>
            <person name="Rogers Y.-H.C."/>
            <person name="Blazej R.G."/>
            <person name="Champe M."/>
            <person name="Pfeiffer B.D."/>
            <person name="Wan K.H."/>
            <person name="Doyle C."/>
            <person name="Baxter E.G."/>
            <person name="Helt G."/>
            <person name="Nelson C.R."/>
            <person name="Miklos G.L.G."/>
            <person name="Abril J.F."/>
            <person name="Agbayani A."/>
            <person name="An H.-J."/>
            <person name="Andrews-Pfannkoch C."/>
            <person name="Baldwin D."/>
            <person name="Ballew R.M."/>
            <person name="Basu A."/>
            <person name="Baxendale J."/>
            <person name="Bayraktaroglu L."/>
            <person name="Beasley E.M."/>
            <person name="Beeson K.Y."/>
            <person name="Benos P.V."/>
            <person name="Berman B.P."/>
            <person name="Bhandari D."/>
            <person name="Bolshakov S."/>
            <person name="Borkova D."/>
            <person name="Botchan M.R."/>
            <person name="Bouck J."/>
            <person name="Brokstein P."/>
            <person name="Brottier P."/>
            <person name="Burtis K.C."/>
            <person name="Busam D.A."/>
            <person name="Butler H."/>
            <person name="Cadieu E."/>
            <person name="Center A."/>
            <person name="Chandra I."/>
            <person name="Cherry J.M."/>
            <person name="Cawley S."/>
            <person name="Dahlke C."/>
            <person name="Davenport L.B."/>
            <person name="Davies P."/>
            <person name="de Pablos B."/>
            <person name="Delcher A."/>
            <person name="Deng Z."/>
            <person name="Mays A.D."/>
            <person name="Dew I."/>
            <person name="Dietz S.M."/>
            <person name="Dodson K."/>
            <person name="Doup L.E."/>
            <person name="Downes M."/>
            <person name="Dugan-Rocha S."/>
            <person name="Dunkov B.C."/>
            <person name="Dunn P."/>
            <person name="Durbin K.J."/>
            <person name="Evangelista C.C."/>
            <person name="Ferraz C."/>
            <person name="Ferriera S."/>
            <person name="Fleischmann W."/>
            <person name="Fosler C."/>
            <person name="Gabrielian A.E."/>
            <person name="Garg N.S."/>
            <person name="Gelbart W.M."/>
            <person name="Glasser K."/>
            <person name="Glodek A."/>
            <person name="Gong F."/>
            <person name="Gorrell J.H."/>
            <person name="Gu Z."/>
            <person name="Guan P."/>
            <person name="Harris M."/>
            <person name="Harris N.L."/>
            <person name="Harvey D.A."/>
            <person name="Heiman T.J."/>
            <person name="Hernandez J.R."/>
            <person name="Houck J."/>
            <person name="Hostin D."/>
            <person name="Houston K.A."/>
            <person name="Howland T.J."/>
            <person name="Wei M.-H."/>
            <person name="Ibegwam C."/>
            <person name="Jalali M."/>
            <person name="Kalush F."/>
            <person name="Karpen G.H."/>
            <person name="Ke Z."/>
            <person name="Kennison J.A."/>
            <person name="Ketchum K.A."/>
            <person name="Kimmel B.E."/>
            <person name="Kodira C.D."/>
            <person name="Kraft C.L."/>
            <person name="Kravitz S."/>
            <person name="Kulp D."/>
            <person name="Lai Z."/>
            <person name="Lasko P."/>
            <person name="Lei Y."/>
            <person name="Levitsky A.A."/>
            <person name="Li J.H."/>
            <person name="Li Z."/>
            <person name="Liang Y."/>
            <person name="Lin X."/>
            <person name="Liu X."/>
            <person name="Mattei B."/>
            <person name="McIntosh T.C."/>
            <person name="McLeod M.P."/>
            <person name="McPherson D."/>
            <person name="Merkulov G."/>
            <person name="Milshina N.V."/>
            <person name="Mobarry C."/>
            <person name="Morris J."/>
            <person name="Moshrefi A."/>
            <person name="Mount S.M."/>
            <person name="Moy M."/>
            <person name="Murphy B."/>
            <person name="Murphy L."/>
            <person name="Muzny D.M."/>
            <person name="Nelson D.L."/>
            <person name="Nelson D.R."/>
            <person name="Nelson K.A."/>
            <person name="Nixon K."/>
            <person name="Nusskern D.R."/>
            <person name="Pacleb J.M."/>
            <person name="Palazzolo M."/>
            <person name="Pittman G.S."/>
            <person name="Pan S."/>
            <person name="Pollard J."/>
            <person name="Puri V."/>
            <person name="Reese M.G."/>
            <person name="Reinert K."/>
            <person name="Remington K."/>
            <person name="Saunders R.D.C."/>
            <person name="Scheeler F."/>
            <person name="Shen H."/>
            <person name="Shue B.C."/>
            <person name="Siden-Kiamos I."/>
            <person name="Simpson M."/>
            <person name="Skupski M.P."/>
            <person name="Smith T.J."/>
            <person name="Spier E."/>
            <person name="Spradling A.C."/>
            <person name="Stapleton M."/>
            <person name="Strong R."/>
            <person name="Sun E."/>
            <person name="Svirskas R."/>
            <person name="Tector C."/>
            <person name="Turner R."/>
            <person name="Venter E."/>
            <person name="Wang A.H."/>
            <person name="Wang X."/>
            <person name="Wang Z.-Y."/>
            <person name="Wassarman D.A."/>
            <person name="Weinstock G.M."/>
            <person name="Weissenbach J."/>
            <person name="Williams S.M."/>
            <person name="Woodage T."/>
            <person name="Worley K.C."/>
            <person name="Wu D."/>
            <person name="Yang S."/>
            <person name="Yao Q.A."/>
            <person name="Ye J."/>
            <person name="Yeh R.-F."/>
            <person name="Zaveri J.S."/>
            <person name="Zhan M."/>
            <person name="Zhang G."/>
            <person name="Zhao Q."/>
            <person name="Zheng L."/>
            <person name="Zheng X.H."/>
            <person name="Zhong F.N."/>
            <person name="Zhong W."/>
            <person name="Zhou X."/>
            <person name="Zhu S.C."/>
            <person name="Zhu X."/>
            <person name="Smith H.O."/>
            <person name="Gibbs R.A."/>
            <person name="Myers E.W."/>
            <person name="Rubin G.M."/>
            <person name="Venter J.C."/>
        </authorList>
    </citation>
    <scope>NUCLEOTIDE SEQUENCE [LARGE SCALE GENOMIC DNA]</scope>
    <source>
        <strain>Berkeley</strain>
    </source>
</reference>
<reference key="4">
    <citation type="journal article" date="2002" name="Genome Biol.">
        <title>Annotation of the Drosophila melanogaster euchromatic genome: a systematic review.</title>
        <authorList>
            <person name="Misra S."/>
            <person name="Crosby M.A."/>
            <person name="Mungall C.J."/>
            <person name="Matthews B.B."/>
            <person name="Campbell K.S."/>
            <person name="Hradecky P."/>
            <person name="Huang Y."/>
            <person name="Kaminker J.S."/>
            <person name="Millburn G.H."/>
            <person name="Prochnik S.E."/>
            <person name="Smith C.D."/>
            <person name="Tupy J.L."/>
            <person name="Whitfield E.J."/>
            <person name="Bayraktaroglu L."/>
            <person name="Berman B.P."/>
            <person name="Bettencourt B.R."/>
            <person name="Celniker S.E."/>
            <person name="de Grey A.D.N.J."/>
            <person name="Drysdale R.A."/>
            <person name="Harris N.L."/>
            <person name="Richter J."/>
            <person name="Russo S."/>
            <person name="Schroeder A.J."/>
            <person name="Shu S.Q."/>
            <person name="Stapleton M."/>
            <person name="Yamada C."/>
            <person name="Ashburner M."/>
            <person name="Gelbart W.M."/>
            <person name="Rubin G.M."/>
            <person name="Lewis S.E."/>
        </authorList>
    </citation>
    <scope>GENOME REANNOTATION</scope>
    <source>
        <strain>Berkeley</strain>
    </source>
</reference>
<reference key="5">
    <citation type="submission" date="2006-11" db="EMBL/GenBank/DDBJ databases">
        <authorList>
            <person name="Stapleton M."/>
            <person name="Carlson J.W."/>
            <person name="Chavez C."/>
            <person name="Frise E."/>
            <person name="George R.A."/>
            <person name="Kapadia B."/>
            <person name="Pacleb J.M."/>
            <person name="Park S."/>
            <person name="Wan K.H."/>
            <person name="Yu C."/>
            <person name="Celniker S.E."/>
        </authorList>
    </citation>
    <scope>NUCLEOTIDE SEQUENCE [LARGE SCALE MRNA]</scope>
    <source>
        <strain>Berkeley</strain>
        <tissue>Embryo</tissue>
    </source>
</reference>
<reference key="6">
    <citation type="journal article" date="1985" name="EMBO J.">
        <title>Isolation and chromosomal location of putative vitelline membrane genes in Drosophila melanogaster.</title>
        <authorList>
            <person name="Mindrinos M.N."/>
            <person name="Scherer L.J."/>
            <person name="Garcini F.J."/>
            <person name="Kwan H."/>
            <person name="Jacobs K.A."/>
            <person name="Petri W.H."/>
        </authorList>
    </citation>
    <scope>NUCLEOTIDE SEQUENCE [MRNA] OF 1-96</scope>
    <source>
        <strain>Daekwanryeong</strain>
    </source>
</reference>
<reference key="7">
    <citation type="journal article" date="1988" name="Dev. Biol.">
        <title>Drosophila vitelline membrane genes contain a 114 base pair region of highly conserved coding sequence.</title>
        <authorList>
            <person name="Scherer L.J."/>
            <person name="Harris D.H."/>
            <person name="Petri W.H."/>
        </authorList>
    </citation>
    <scope>NUCLEOTIDE SEQUENCE [GENOMIC DNA] OF 69-106</scope>
    <source>
        <strain>Oregon-R</strain>
        <tissue>Embryo</tissue>
    </source>
</reference>
<dbReference type="EMBL" id="L08852">
    <property type="protein sequence ID" value="AAC37200.1"/>
    <property type="molecule type" value="Unassigned_DNA"/>
</dbReference>
<dbReference type="EMBL" id="EF441692">
    <property type="protein sequence ID" value="ABO71733.1"/>
    <property type="molecule type" value="Genomic_DNA"/>
</dbReference>
<dbReference type="EMBL" id="AE014134">
    <property type="protein sequence ID" value="AAF53303.1"/>
    <property type="molecule type" value="Genomic_DNA"/>
</dbReference>
<dbReference type="EMBL" id="BT023245">
    <property type="protein sequence ID" value="AAY55661.1"/>
    <property type="molecule type" value="mRNA"/>
</dbReference>
<dbReference type="EMBL" id="BT029421">
    <property type="protein sequence ID" value="ABK57078.1"/>
    <property type="status" value="ALT_INIT"/>
    <property type="molecule type" value="mRNA"/>
</dbReference>
<dbReference type="EMBL" id="BT029422">
    <property type="protein sequence ID" value="ABK57079.1"/>
    <property type="status" value="ALT_INIT"/>
    <property type="molecule type" value="mRNA"/>
</dbReference>
<dbReference type="EMBL" id="X01802">
    <property type="protein sequence ID" value="CAA25933.1"/>
    <property type="molecule type" value="mRNA"/>
</dbReference>
<dbReference type="EMBL" id="M22700">
    <property type="protein sequence ID" value="AAA29018.1"/>
    <property type="molecule type" value="Genomic_DNA"/>
</dbReference>
<dbReference type="RefSeq" id="NP_476785.1">
    <property type="nucleotide sequence ID" value="NM_057437.4"/>
</dbReference>
<dbReference type="BioGRID" id="60793">
    <property type="interactions" value="4"/>
</dbReference>
<dbReference type="FunCoup" id="Q06521">
    <property type="interactions" value="7"/>
</dbReference>
<dbReference type="IntAct" id="Q06521">
    <property type="interactions" value="1"/>
</dbReference>
<dbReference type="STRING" id="7227.FBpp0080099"/>
<dbReference type="PaxDb" id="7227-FBpp0080099"/>
<dbReference type="DNASU" id="34758"/>
<dbReference type="EnsemblMetazoa" id="FBtr0080521">
    <property type="protein sequence ID" value="FBpp0080099"/>
    <property type="gene ID" value="FBgn0003983"/>
</dbReference>
<dbReference type="GeneID" id="34758"/>
<dbReference type="KEGG" id="dme:Dmel_CG9271"/>
<dbReference type="AGR" id="FB:FBgn0003983"/>
<dbReference type="CTD" id="34758"/>
<dbReference type="FlyBase" id="FBgn0003983">
    <property type="gene designation" value="Vm34Ca"/>
</dbReference>
<dbReference type="VEuPathDB" id="VectorBase:FBgn0003983"/>
<dbReference type="eggNOG" id="ENOG502T8PE">
    <property type="taxonomic scope" value="Eukaryota"/>
</dbReference>
<dbReference type="GeneTree" id="ENSGT00540000073505"/>
<dbReference type="HOGENOM" id="CLU_2040499_0_0_1"/>
<dbReference type="InParanoid" id="Q06521"/>
<dbReference type="OMA" id="YSHYAPV"/>
<dbReference type="PhylomeDB" id="Q06521"/>
<dbReference type="SignaLink" id="Q06521"/>
<dbReference type="BioGRID-ORCS" id="34758">
    <property type="hits" value="0 hits in 1 CRISPR screen"/>
</dbReference>
<dbReference type="GenomeRNAi" id="34758"/>
<dbReference type="PRO" id="PR:Q06521"/>
<dbReference type="Proteomes" id="UP000000803">
    <property type="component" value="Chromosome 2L"/>
</dbReference>
<dbReference type="Bgee" id="FBgn0003983">
    <property type="expression patterns" value="Expressed in ovarian sheath cell (Drosophila) in ovary and 66 other cell types or tissues"/>
</dbReference>
<dbReference type="ExpressionAtlas" id="Q06521">
    <property type="expression patterns" value="baseline and differential"/>
</dbReference>
<dbReference type="GO" id="GO:0005576">
    <property type="term" value="C:extracellular region"/>
    <property type="evidence" value="ECO:0007669"/>
    <property type="project" value="UniProtKB-SubCell"/>
</dbReference>
<dbReference type="GO" id="GO:0060388">
    <property type="term" value="C:vitelline envelope"/>
    <property type="evidence" value="ECO:0000250"/>
    <property type="project" value="FlyBase"/>
</dbReference>
<dbReference type="InterPro" id="IPR013135">
    <property type="entry name" value="Vitelline_membr_Cys-rich-dom"/>
</dbReference>
<dbReference type="Pfam" id="PF10542">
    <property type="entry name" value="Vitelline_membr"/>
    <property type="match status" value="1"/>
</dbReference>
<dbReference type="PROSITE" id="PS51137">
    <property type="entry name" value="VM"/>
    <property type="match status" value="1"/>
</dbReference>
<keyword id="KW-1185">Reference proteome</keyword>
<keyword id="KW-0964">Secreted</keyword>
<keyword id="KW-0732">Signal</keyword>
<feature type="signal peptide" evidence="1">
    <location>
        <begin position="1"/>
        <end position="19"/>
    </location>
</feature>
<feature type="chain" id="PRO_0000022677" description="Vitelline membrane protein Vm34Ca">
    <location>
        <begin position="20"/>
        <end position="119"/>
    </location>
</feature>
<feature type="domain" description="VM" evidence="2">
    <location>
        <begin position="69"/>
        <end position="106"/>
    </location>
</feature>
<feature type="sequence conflict" description="In Ref. 1; AAC37200 and 6; CAA25933." evidence="3" ref="1 6">
    <original>PQAYA</original>
    <variation>SPGLR</variation>
    <location>
        <begin position="52"/>
        <end position="56"/>
    </location>
</feature>
<feature type="sequence conflict" description="In Ref. 6; CAA25933." evidence="3" ref="6">
    <original>A</original>
    <variation>R</variation>
    <location>
        <position position="96"/>
    </location>
</feature>
<organism>
    <name type="scientific">Drosophila melanogaster</name>
    <name type="common">Fruit fly</name>
    <dbReference type="NCBI Taxonomy" id="7227"/>
    <lineage>
        <taxon>Eukaryota</taxon>
        <taxon>Metazoa</taxon>
        <taxon>Ecdysozoa</taxon>
        <taxon>Arthropoda</taxon>
        <taxon>Hexapoda</taxon>
        <taxon>Insecta</taxon>
        <taxon>Pterygota</taxon>
        <taxon>Neoptera</taxon>
        <taxon>Endopterygota</taxon>
        <taxon>Diptera</taxon>
        <taxon>Brachycera</taxon>
        <taxon>Muscomorpha</taxon>
        <taxon>Ephydroidea</taxon>
        <taxon>Drosophilidae</taxon>
        <taxon>Drosophila</taxon>
        <taxon>Sophophora</taxon>
    </lineage>
</organism>
<protein>
    <recommendedName>
        <fullName>Vitelline membrane protein Vm34Ca</fullName>
    </recommendedName>
</protein>
<comment type="function">
    <text>Major early eggshell protein.</text>
</comment>
<comment type="subcellular location">
    <subcellularLocation>
        <location evidence="3">Secreted</location>
    </subcellularLocation>
</comment>
<comment type="tissue specificity">
    <text>Follicle cells.</text>
</comment>
<comment type="developmental stage">
    <text>Expressed during vitelline membrane biosynthesis.</text>
</comment>
<comment type="similarity">
    <text evidence="3">Belongs to the vitelline membrane protein family.</text>
</comment>
<comment type="sequence caution" evidence="3">
    <conflict type="erroneous initiation">
        <sequence resource="EMBL-CDS" id="ABK57078"/>
    </conflict>
</comment>
<comment type="sequence caution" evidence="3">
    <conflict type="erroneous initiation">
        <sequence resource="EMBL-CDS" id="ABK57079"/>
    </conflict>
</comment>
<name>VTU3_DROME</name>
<gene>
    <name type="primary">Vm34Ca</name>
    <name type="synonym">VM34C.1</name>
    <name type="ORF">CG9271</name>
</gene>
<sequence>MKCIAIVSTICLLAAFVAADKEDKMLGSSYGGGYGKPAAAPAPSYSAPAAAPQAYAAPAAPSYAAAPVSIPAPPCPKNYLFSCQPNLAPVPCSAPAPSYGSAGAYSQYAPVYAPQPIQW</sequence>
<accession>Q06521</accession>
<accession>A0JQ51</accession>
<accession>A0JQ52</accession>
<accession>A4UM24</accession>
<accession>Q9VJY2</accession>
<proteinExistence type="evidence at transcript level"/>
<evidence type="ECO:0000255" key="1"/>
<evidence type="ECO:0000255" key="2">
    <source>
        <dbReference type="PROSITE-ProRule" id="PRU00483"/>
    </source>
</evidence>
<evidence type="ECO:0000305" key="3"/>